<gene>
    <name type="primary">PET111</name>
    <name type="ordered locus">YMR257C</name>
    <name type="ORF">YM9920.11C</name>
</gene>
<protein>
    <recommendedName>
        <fullName>Protein PET111, mitochondrial</fullName>
    </recommendedName>
</protein>
<dbReference type="EMBL" id="M17143">
    <property type="protein sequence ID" value="AAA02906.1"/>
    <property type="molecule type" value="Unassigned_DNA"/>
</dbReference>
<dbReference type="EMBL" id="Z48639">
    <property type="protein sequence ID" value="CAA88584.1"/>
    <property type="molecule type" value="Genomic_DNA"/>
</dbReference>
<dbReference type="EMBL" id="AY693003">
    <property type="protein sequence ID" value="AAT93022.1"/>
    <property type="molecule type" value="Genomic_DNA"/>
</dbReference>
<dbReference type="EMBL" id="BK006946">
    <property type="protein sequence ID" value="DAA10157.1"/>
    <property type="molecule type" value="Genomic_DNA"/>
</dbReference>
<dbReference type="PIR" id="S53079">
    <property type="entry name" value="S53079"/>
</dbReference>
<dbReference type="RefSeq" id="NP_013984.1">
    <property type="nucleotide sequence ID" value="NM_001182764.1"/>
</dbReference>
<dbReference type="BioGRID" id="35435">
    <property type="interactions" value="182"/>
</dbReference>
<dbReference type="DIP" id="DIP-2800N"/>
<dbReference type="FunCoup" id="P08468">
    <property type="interactions" value="84"/>
</dbReference>
<dbReference type="IntAct" id="P08468">
    <property type="interactions" value="6"/>
</dbReference>
<dbReference type="MINT" id="P08468"/>
<dbReference type="STRING" id="4932.YMR257C"/>
<dbReference type="GlyGen" id="P08468">
    <property type="glycosylation" value="2 sites, 1 O-linked glycan (2 sites)"/>
</dbReference>
<dbReference type="iPTMnet" id="P08468"/>
<dbReference type="PaxDb" id="4932-YMR257C"/>
<dbReference type="PeptideAtlas" id="P08468"/>
<dbReference type="EnsemblFungi" id="YMR257C_mRNA">
    <property type="protein sequence ID" value="YMR257C"/>
    <property type="gene ID" value="YMR257C"/>
</dbReference>
<dbReference type="GeneID" id="855299"/>
<dbReference type="KEGG" id="sce:YMR257C"/>
<dbReference type="AGR" id="SGD:S000004870"/>
<dbReference type="SGD" id="S000004870">
    <property type="gene designation" value="PET111"/>
</dbReference>
<dbReference type="VEuPathDB" id="FungiDB:YMR257C"/>
<dbReference type="eggNOG" id="ENOG502QVG0">
    <property type="taxonomic scope" value="Eukaryota"/>
</dbReference>
<dbReference type="HOGENOM" id="CLU_351657_0_0_1"/>
<dbReference type="InParanoid" id="P08468"/>
<dbReference type="OMA" id="MHESERF"/>
<dbReference type="OrthoDB" id="4061518at2759"/>
<dbReference type="BioCyc" id="YEAST:G3O-32932-MONOMER"/>
<dbReference type="BioGRID-ORCS" id="855299">
    <property type="hits" value="0 hits in 10 CRISPR screens"/>
</dbReference>
<dbReference type="PRO" id="PR:P08468"/>
<dbReference type="Proteomes" id="UP000002311">
    <property type="component" value="Chromosome XIII"/>
</dbReference>
<dbReference type="RNAct" id="P08468">
    <property type="molecule type" value="protein"/>
</dbReference>
<dbReference type="GO" id="GO:0005743">
    <property type="term" value="C:mitochondrial inner membrane"/>
    <property type="evidence" value="ECO:0000314"/>
    <property type="project" value="SGD"/>
</dbReference>
<dbReference type="GO" id="GO:0005759">
    <property type="term" value="C:mitochondrial matrix"/>
    <property type="evidence" value="ECO:0007669"/>
    <property type="project" value="UniProtKB-SubCell"/>
</dbReference>
<dbReference type="GO" id="GO:0005739">
    <property type="term" value="C:mitochondrion"/>
    <property type="evidence" value="ECO:0007005"/>
    <property type="project" value="SGD"/>
</dbReference>
<dbReference type="GO" id="GO:0045182">
    <property type="term" value="F:translation regulator activity"/>
    <property type="evidence" value="ECO:0000315"/>
    <property type="project" value="SGD"/>
</dbReference>
<dbReference type="GO" id="GO:0033617">
    <property type="term" value="P:mitochondrial cytochrome c oxidase assembly"/>
    <property type="evidence" value="ECO:0000315"/>
    <property type="project" value="SGD"/>
</dbReference>
<dbReference type="GO" id="GO:0070131">
    <property type="term" value="P:positive regulation of mitochondrial translation"/>
    <property type="evidence" value="ECO:0000315"/>
    <property type="project" value="SGD"/>
</dbReference>
<feature type="transit peptide" description="Mitochondrion">
    <location>
        <begin position="1"/>
        <end status="unknown"/>
    </location>
</feature>
<feature type="chain" id="PRO_0000022173" description="Protein PET111, mitochondrial">
    <location>
        <begin status="unknown"/>
        <end position="800"/>
    </location>
</feature>
<feature type="sequence conflict" description="In Ref. 1; AAA02906." evidence="2" ref="1">
    <original>D</original>
    <variation>G</variation>
    <location>
        <position position="278"/>
    </location>
</feature>
<feature type="sequence conflict" description="In Ref. 1; AAA02906." evidence="2" ref="1">
    <original>P</original>
    <variation>S</variation>
    <location>
        <position position="709"/>
    </location>
</feature>
<reference key="1">
    <citation type="journal article" date="1987" name="Mol. Cell. Biol.">
        <title>Saccharomyces cerevisiae positive regulatory gene PET111 encodes a mitochondrial protein that is translated from an mRNA with a long 5' leader.</title>
        <authorList>
            <person name="Strick C.A."/>
            <person name="Fox T.D."/>
        </authorList>
    </citation>
    <scope>NUCLEOTIDE SEQUENCE</scope>
</reference>
<reference key="2">
    <citation type="submission" date="1993-08" db="EMBL/GenBank/DDBJ databases">
        <authorList>
            <person name="Strick C.A."/>
            <person name="Fox T.D."/>
        </authorList>
    </citation>
    <scope>SEQUENCE REVISION</scope>
</reference>
<reference key="3">
    <citation type="journal article" date="1997" name="Nature">
        <title>The nucleotide sequence of Saccharomyces cerevisiae chromosome XIII.</title>
        <authorList>
            <person name="Bowman S."/>
            <person name="Churcher C.M."/>
            <person name="Badcock K."/>
            <person name="Brown D."/>
            <person name="Chillingworth T."/>
            <person name="Connor R."/>
            <person name="Dedman K."/>
            <person name="Devlin K."/>
            <person name="Gentles S."/>
            <person name="Hamlin N."/>
            <person name="Hunt S."/>
            <person name="Jagels K."/>
            <person name="Lye G."/>
            <person name="Moule S."/>
            <person name="Odell C."/>
            <person name="Pearson D."/>
            <person name="Rajandream M.A."/>
            <person name="Rice P."/>
            <person name="Skelton J."/>
            <person name="Walsh S.V."/>
            <person name="Whitehead S."/>
            <person name="Barrell B.G."/>
        </authorList>
    </citation>
    <scope>NUCLEOTIDE SEQUENCE [LARGE SCALE GENOMIC DNA]</scope>
    <source>
        <strain>ATCC 204508 / S288c</strain>
    </source>
</reference>
<reference key="4">
    <citation type="journal article" date="2014" name="G3 (Bethesda)">
        <title>The reference genome sequence of Saccharomyces cerevisiae: Then and now.</title>
        <authorList>
            <person name="Engel S.R."/>
            <person name="Dietrich F.S."/>
            <person name="Fisk D.G."/>
            <person name="Binkley G."/>
            <person name="Balakrishnan R."/>
            <person name="Costanzo M.C."/>
            <person name="Dwight S.S."/>
            <person name="Hitz B.C."/>
            <person name="Karra K."/>
            <person name="Nash R.S."/>
            <person name="Weng S."/>
            <person name="Wong E.D."/>
            <person name="Lloyd P."/>
            <person name="Skrzypek M.S."/>
            <person name="Miyasato S.R."/>
            <person name="Simison M."/>
            <person name="Cherry J.M."/>
        </authorList>
    </citation>
    <scope>GENOME REANNOTATION</scope>
    <source>
        <strain>ATCC 204508 / S288c</strain>
    </source>
</reference>
<reference key="5">
    <citation type="journal article" date="2007" name="Genome Res.">
        <title>Approaching a complete repository of sequence-verified protein-encoding clones for Saccharomyces cerevisiae.</title>
        <authorList>
            <person name="Hu Y."/>
            <person name="Rolfs A."/>
            <person name="Bhullar B."/>
            <person name="Murthy T.V.S."/>
            <person name="Zhu C."/>
            <person name="Berger M.F."/>
            <person name="Camargo A.A."/>
            <person name="Kelley F."/>
            <person name="McCarron S."/>
            <person name="Jepson D."/>
            <person name="Richardson A."/>
            <person name="Raphael J."/>
            <person name="Moreira D."/>
            <person name="Taycher E."/>
            <person name="Zuo D."/>
            <person name="Mohr S."/>
            <person name="Kane M.F."/>
            <person name="Williamson J."/>
            <person name="Simpson A.J.G."/>
            <person name="Bulyk M.L."/>
            <person name="Harlow E."/>
            <person name="Marsischky G."/>
            <person name="Kolodner R.D."/>
            <person name="LaBaer J."/>
        </authorList>
    </citation>
    <scope>NUCLEOTIDE SEQUENCE [GENOMIC DNA]</scope>
    <source>
        <strain>ATCC 204508 / S288c</strain>
    </source>
</reference>
<reference key="6">
    <citation type="journal article" date="2003" name="Nature">
        <title>Global analysis of protein expression in yeast.</title>
        <authorList>
            <person name="Ghaemmaghami S."/>
            <person name="Huh W.-K."/>
            <person name="Bower K."/>
            <person name="Howson R.W."/>
            <person name="Belle A."/>
            <person name="Dephoure N."/>
            <person name="O'Shea E.K."/>
            <person name="Weissman J.S."/>
        </authorList>
    </citation>
    <scope>LEVEL OF PROTEIN EXPRESSION [LARGE SCALE ANALYSIS]</scope>
</reference>
<evidence type="ECO:0000269" key="1">
    <source>
    </source>
</evidence>
<evidence type="ECO:0000305" key="2"/>
<organism>
    <name type="scientific">Saccharomyces cerevisiae (strain ATCC 204508 / S288c)</name>
    <name type="common">Baker's yeast</name>
    <dbReference type="NCBI Taxonomy" id="559292"/>
    <lineage>
        <taxon>Eukaryota</taxon>
        <taxon>Fungi</taxon>
        <taxon>Dikarya</taxon>
        <taxon>Ascomycota</taxon>
        <taxon>Saccharomycotina</taxon>
        <taxon>Saccharomycetes</taxon>
        <taxon>Saccharomycetales</taxon>
        <taxon>Saccharomycetaceae</taxon>
        <taxon>Saccharomyces</taxon>
    </lineage>
</organism>
<sequence length="800" mass="94523">MLQRRFISSSGIKRLLHRESNKVMHTVFFKVRYYSTELIKKKHKEDIEDWVKAQLKDSSTISGVYESRNKLDWMDSITKSPSSLDILKNQYNIVKDKDFGILWKQKFESADPDILMTIISLSTNQKVLFSIQQLLILINSLHFLKRDYDIGQIYTTYEQFTPLLASHTDKGTYGQFIEIMLVVQHNLHHFDVCETLFAEYIKYCKVKPQMISLGLNSFIRSNNTQLAVEFYTQAITNPDTFPITEKQLFEFLRCMERYLDMSSMKHIFYLWLKVKCGDEQSSSTNLPSFKTLAIIHRMLLRFSNTDELNDFLTNPVVLSTGYTSSVQFELIEFCHSLYCIKGDRTKSIDDSILMERVDKFITRLNNNISTRKELYMSVVQAYVSTNNFENLKVILEKIQRDNDISIDGSFHLCISRYFVNTNQFEGLFKYYRSVVKTTDGKTRLRPAFIQQLWSCAVNVYPMLAKEITNDLLVTLKRSQYSKCLTWVYTFLQENAHIHTRKINGGEDSSLSGFNAVDFERFEEFKKKVSHNDVYGAELVISNSLKEGIAPQFSFLYSVLALCLRNSLTGLARVVDVILRTRFRYIPLKVDILWLKWEIISNYRSFEKLSAEHLKELEFKLKEFERVHQKELSVQNYLQLTQICFHTRDFKYACYLISQARKNLDTSNNKQWMMYYMTSLKLASRMHESERFSRILKDWNCNHRASLITPGCIRQIKGFMKYFEKRPAYISTAASIDNKEIKDRIDELVLRYVDYKYQGLENMRKLTLFLKEWFDEEISLLKLEQNERKMKLFEENKKEEE</sequence>
<name>PT111_YEAST</name>
<keyword id="KW-0010">Activator</keyword>
<keyword id="KW-0496">Mitochondrion</keyword>
<keyword id="KW-1185">Reference proteome</keyword>
<keyword id="KW-0809">Transit peptide</keyword>
<keyword id="KW-0810">Translation regulation</keyword>
<comment type="function">
    <text>Required for translation of the mitochondrial gene for cytochrome c oxidase subunit II (COX2).</text>
</comment>
<comment type="subcellular location">
    <subcellularLocation>
        <location>Mitochondrion matrix</location>
    </subcellularLocation>
</comment>
<comment type="miscellaneous">
    <text evidence="1">Present with 538 molecules/cell in log phase SD medium.</text>
</comment>
<comment type="similarity">
    <text evidence="2">To yeast YHR160C.</text>
</comment>
<accession>P08468</accession>
<accession>D6W083</accession>
<proteinExistence type="evidence at protein level"/>